<feature type="chain" id="PRO_0000433218" description="Serine/threonine-protein kinase WNK" evidence="10">
    <location>
        <begin position="1"/>
        <end position="1850"/>
    </location>
</feature>
<feature type="domain" description="Protein kinase" evidence="4">
    <location>
        <begin position="334"/>
        <end position="596"/>
    </location>
</feature>
<feature type="region of interest" description="Disordered" evidence="5">
    <location>
        <begin position="1"/>
        <end position="108"/>
    </location>
</feature>
<feature type="region of interest" description="Disordered" evidence="5">
    <location>
        <begin position="221"/>
        <end position="253"/>
    </location>
</feature>
<feature type="region of interest" description="Disordered" evidence="5">
    <location>
        <begin position="272"/>
        <end position="309"/>
    </location>
</feature>
<feature type="region of interest" description="Disordered" evidence="5">
    <location>
        <begin position="727"/>
        <end position="790"/>
    </location>
</feature>
<feature type="region of interest" description="Disordered" evidence="5">
    <location>
        <begin position="890"/>
        <end position="943"/>
    </location>
</feature>
<feature type="region of interest" description="Disordered" evidence="5">
    <location>
        <begin position="1040"/>
        <end position="1130"/>
    </location>
</feature>
<feature type="region of interest" description="Disordered" evidence="5">
    <location>
        <begin position="1188"/>
        <end position="1249"/>
    </location>
</feature>
<feature type="region of interest" description="Disordered" evidence="5">
    <location>
        <begin position="1588"/>
        <end position="1636"/>
    </location>
</feature>
<feature type="region of interest" description="Disordered" evidence="5">
    <location>
        <begin position="1721"/>
        <end position="1740"/>
    </location>
</feature>
<feature type="region of interest" description="Disordered" evidence="5">
    <location>
        <begin position="1769"/>
        <end position="1850"/>
    </location>
</feature>
<feature type="coiled-coil region" evidence="3">
    <location>
        <begin position="693"/>
        <end position="749"/>
    </location>
</feature>
<feature type="compositionally biased region" description="Low complexity" evidence="5">
    <location>
        <begin position="16"/>
        <end position="26"/>
    </location>
</feature>
<feature type="compositionally biased region" description="Low complexity" evidence="5">
    <location>
        <begin position="234"/>
        <end position="251"/>
    </location>
</feature>
<feature type="compositionally biased region" description="Basic and acidic residues" evidence="5">
    <location>
        <begin position="284"/>
        <end position="309"/>
    </location>
</feature>
<feature type="compositionally biased region" description="Basic and acidic residues" evidence="5">
    <location>
        <begin position="727"/>
        <end position="742"/>
    </location>
</feature>
<feature type="compositionally biased region" description="Pro residues" evidence="5">
    <location>
        <begin position="751"/>
        <end position="760"/>
    </location>
</feature>
<feature type="compositionally biased region" description="Polar residues" evidence="5">
    <location>
        <begin position="776"/>
        <end position="790"/>
    </location>
</feature>
<feature type="compositionally biased region" description="Low complexity" evidence="5">
    <location>
        <begin position="890"/>
        <end position="934"/>
    </location>
</feature>
<feature type="compositionally biased region" description="Basic and acidic residues" evidence="5">
    <location>
        <begin position="1062"/>
        <end position="1071"/>
    </location>
</feature>
<feature type="compositionally biased region" description="Polar residues" evidence="5">
    <location>
        <begin position="1077"/>
        <end position="1101"/>
    </location>
</feature>
<feature type="compositionally biased region" description="Low complexity" evidence="5">
    <location>
        <begin position="1188"/>
        <end position="1207"/>
    </location>
</feature>
<feature type="compositionally biased region" description="Polar residues" evidence="5">
    <location>
        <begin position="1208"/>
        <end position="1217"/>
    </location>
</feature>
<feature type="compositionally biased region" description="Low complexity" evidence="5">
    <location>
        <begin position="1771"/>
        <end position="1805"/>
    </location>
</feature>
<feature type="compositionally biased region" description="Polar residues" evidence="5">
    <location>
        <begin position="1806"/>
        <end position="1820"/>
    </location>
</feature>
<feature type="compositionally biased region" description="Low complexity" evidence="5">
    <location>
        <begin position="1821"/>
        <end position="1832"/>
    </location>
</feature>
<feature type="active site" description="Proton acceptor" evidence="2">
    <location>
        <position position="483"/>
    </location>
</feature>
<feature type="binding site" evidence="1">
    <location>
        <position position="344"/>
    </location>
    <ligand>
        <name>ATP</name>
        <dbReference type="ChEBI" id="CHEBI:30616"/>
    </ligand>
</feature>
<feature type="binding site" evidence="1">
    <location>
        <begin position="416"/>
        <end position="419"/>
    </location>
    <ligand>
        <name>ATP</name>
        <dbReference type="ChEBI" id="CHEBI:30616"/>
    </ligand>
</feature>
<feature type="binding site" evidence="1">
    <location>
        <position position="466"/>
    </location>
    <ligand>
        <name>ATP</name>
        <dbReference type="ChEBI" id="CHEBI:30616"/>
    </ligand>
</feature>
<feature type="splice variant" id="VSP_057683" description="In isoform u and isoform v." evidence="10">
    <location>
        <begin position="1"/>
        <end position="1650"/>
    </location>
</feature>
<feature type="splice variant" id="VSP_057684" description="In isoform c, isoform f, isoform i and isoform l." evidence="10">
    <location>
        <begin position="1"/>
        <end position="53"/>
    </location>
</feature>
<feature type="splice variant" id="VSP_057685" description="In isoform a, isoform b, isoform c, isoform g, isoform h, isoform i, isoform m, isoform r, isoform s and isoform t." evidence="10">
    <location>
        <begin position="82"/>
        <end position="83"/>
    </location>
</feature>
<feature type="splice variant" id="VSP_057686" description="In isoform a, isoform b, isoform c, isoform d, isoform e, isoform f, isoform m, isoform p, isoform q and isoform t." evidence="10">
    <location>
        <begin position="1341"/>
        <end position="1343"/>
    </location>
</feature>
<feature type="splice variant" id="VSP_057687" description="In isoform b, isoform e, isoform h, isoform k, isoform o, isoform q, isoform s and isoform t." evidence="10">
    <location>
        <begin position="1488"/>
        <end position="1648"/>
    </location>
</feature>
<feature type="splice variant" id="VSP_057688" description="In isoform a, isoform b, isoform c, isoform d, isoform e, isoform f, isoform g, isoform h, isoform i, isoform j, isoform k, isoform l and isoform u." evidence="10">
    <original>IPDNEGQHHCNSFRCIGDPNDNVSIVNQIKQRLGIIPSSRQSVRSATSSSPSTPPSSSSAPPKSLSSPTKSYVSHCSLSIGYGSTASSEQQQREPSPSATTSSFLSDPATGVIENV</original>
    <variation>TTKVNTTVIPSDVLATRMTMSQSSTKSSNVSVSSRHRDNQSAPPRHHHHQPHPPHHPHLQNHYHPPQNHTSATAPCPSAMVQLQAVSNNNVNPLHQPPHPVSSQIPPQA</variation>
    <location>
        <begin position="1735"/>
        <end position="1850"/>
    </location>
</feature>
<feature type="mutagenesis site" description="No catalytic activity. Arrest at L2 larval stage and abnormal formation of the excretory canal." evidence="7">
    <original>K</original>
    <variation>M</variation>
    <location>
        <position position="346"/>
    </location>
</feature>
<feature type="mutagenesis site" description="No defect in the formation of the excretory canal." evidence="7">
    <original>S</original>
    <variation>A</variation>
    <location>
        <position position="497"/>
    </location>
</feature>
<feature type="mutagenesis site" description="Severe loss of interaction with gck-3 and abnormal formation of the excretory canal; when associated with A-1222." evidence="7">
    <original>F</original>
    <variation>A</variation>
    <location>
        <position position="1133"/>
    </location>
</feature>
<feature type="mutagenesis site" description="Severe loss of interaction with gck-3 and abnormal formation of the excretory canal; when associated with A-1133." evidence="7">
    <original>F</original>
    <variation>A</variation>
    <location>
        <position position="1222"/>
    </location>
</feature>
<sequence>MPDSITNGGRPPAPPSSVSSTTASTTGNFGTRRRLVNRIKKVDELHPAQENPTMGSHWLSEQERSRLEAVQQDWRRTRPMKFQWTSKKRPDDPTTSSPSTVSISNALENSTPSLNNVSSITNSSSPFSLSSAATSTASAIIPFTSNVATNHPHLNHHVSRIPQAIVTGGTNGSLPPLLISPTSAAAATPLISGKAGPMSPSTGSPINVAATVLQNAVSSPQHSIFDRSRLNKIPPNTSLASSSSPSDAANNDKPIQQRHSILSNVRTLTQAMVNDGPRTLTGDDMDKMVSEEERARKEQEKREEEEKAARRIDVEDDFDAQEKPIDKSKNGRFLKFDEELGRGSFKTVFRGLDTETGVAVAWCELQESKLNKTERQRFREEAEMLKDLQHPNIVRFYDYWESADLCGKRKYIVLVTELMTSGTLKMYLKRFKRINIKVLKSWCRQILKGLSFLHTRNPPVIHRDLKCDNIFITGTTGSVKIGDLGLATLKNKSFAKSVIGTPEFMAPEMYEEMYDESVDVYAFGMCLLEMVTGEYPYSECMNPATIYRKVISGVKPECFSRIPAQYPEIREIIDRCIRVRREERSTVKQLLVDDFFTPEDLIGIRVEIKNRDADLNDLNVEIQMQLRVYDEKKRKQYRFKENEGLQFAFDIENDSPDEVVQQMIEQQHIPDEDTRMITKLIKDKVDAFRRDRDHRLLEIKRAKEEEERIREEAEIKEELRLRAEAKEKEKERLEKERLEKKAAAAAAANPNPTPIPPTPATPHSSAQQQPIPPPLSTQTSAEIQQSAQQPSVPVTMIANIPAMSPTSAQPQPVLSPTSAAVPVPTTMIHVPKPSEIPVQNVATTAAPVAANNVPPSPAPFKTEDIQTPTLAQNTVPRTISTDASGLVINTPASIASPSPAPSATDVASTTAPVTPAPTPTTTTDGGAAAASTTTENKEEKRKSNKRKVVMEILGCDESRNFALVSCRLDTSHKSVTFQFAPGTDKPCTIATKLLAEDCLLKVHVHIVEAQLGEVIQLINSDGKKGVGTKLATVLDPNSTEPPTITAVMPKDSSAATASNTKPKIEIEKTPPTRDASQEPNNVQVTNVRKVSQESNAESVQSIPRPGGIIVMSPTNQTDSAPPPTGAAAKPSRFQVTKSADPIATPISSSISTATVIPIVAATPTNITSEPVIVQPITAQVITHLATPSPVSHSLSSNSSPSATTHSNMSSIQSTTSVPGRRFTVQPVSQAESGISSSISTPHPEPTPAITSCPPPVPSVPPVVSNGTLNLEVAPKQTPSATNQNVDTQHSSSTASTATLVSETPATVHVTPISVPAPVQEPLVIDHHSDVLTQLDSELRKCFQVSGVSHSASPSTVVESLTSMTPQTIPLACQTVPASIGQAPAVIAAAHAASLIPNASVPQSPSRLDAETGLAGLHEKLEALKMEQDRREDMGDDAIGTTTTDGKDEIPIDTLKGLAEALGKVIHADGRETTPMPPDHPDLTDASTQQLISPSNPDVLTTMSSAVEGSASSTMIEDIDASTSAVDASMMNSMPPGAQNSTDQIPAAMTLSMDQECAQSMTSSITRNTTGTKLATFENLETALSSTLGTHIRQPNAPSSRDETTAPMTPSFTNERIGGGGGGGATSFSIGTPPSHSPFPVSECDYDLKGQMDLESEDPEVIQMIVRHRMEQHKLLEKQRVEIERLRSKIRVPRATSVNPEMIGDDEADTTLTALQSALGNASLSLPASPPPNTEIPDNEGQHHCNSFRCIGDPNDNVSIVNQIKQRLGIIPSSRQSVRSATSSSPSTPPSSSSAPPKSLSSPTKSYVSHCSLSIGYGSTASSEQQQREPSPSATTSSFLSDPATGVIENV</sequence>
<name>WNK_CAEEL</name>
<keyword id="KW-0025">Alternative splicing</keyword>
<keyword id="KW-0067">ATP-binding</keyword>
<keyword id="KW-0175">Coiled coil</keyword>
<keyword id="KW-0963">Cytoplasm</keyword>
<keyword id="KW-0217">Developmental protein</keyword>
<keyword id="KW-0418">Kinase</keyword>
<keyword id="KW-0547">Nucleotide-binding</keyword>
<keyword id="KW-1185">Reference proteome</keyword>
<keyword id="KW-0723">Serine/threonine-protein kinase</keyword>
<keyword id="KW-0808">Transferase</keyword>
<comment type="function">
    <text evidence="1 7 8 9">Serine/threonine-protein kinase component of the WNK3-SPAK/OSR1 kinase cascade, which plays an important role in the regulation of electrolyte homeostasis and regulatory volume increase in response to hyperosmotic stress (PubMed:36318922). Wnk-1 mediates regulatory volume increase in response to hyperosmotic stress by acting as a molecular crowding sensor, which senses cell shrinkage and mediates formation of a membraneless compartment by undergoing liquid-liquid phase separation (PubMed:36318922). The membraneless compartment concentrates wnk-1 with its substrates (By similarity). Phosphorylates gck-3 (PubMed:18049475). Plays a role in osmotic stress responses during which it increases gpdh-1 translation, likely by phosphorylating gck-3 (PubMed:23076791). Essential for larval development and the tubular formation of the excretory canals (PubMed:18049475).</text>
</comment>
<comment type="catalytic activity">
    <reaction evidence="7">
        <text>L-seryl-[protein] + ATP = O-phospho-L-seryl-[protein] + ADP + H(+)</text>
        <dbReference type="Rhea" id="RHEA:17989"/>
        <dbReference type="Rhea" id="RHEA-COMP:9863"/>
        <dbReference type="Rhea" id="RHEA-COMP:11604"/>
        <dbReference type="ChEBI" id="CHEBI:15378"/>
        <dbReference type="ChEBI" id="CHEBI:29999"/>
        <dbReference type="ChEBI" id="CHEBI:30616"/>
        <dbReference type="ChEBI" id="CHEBI:83421"/>
        <dbReference type="ChEBI" id="CHEBI:456216"/>
        <dbReference type="EC" id="2.7.11.1"/>
    </reaction>
</comment>
<comment type="catalytic activity">
    <reaction evidence="7">
        <text>L-threonyl-[protein] + ATP = O-phospho-L-threonyl-[protein] + ADP + H(+)</text>
        <dbReference type="Rhea" id="RHEA:46608"/>
        <dbReference type="Rhea" id="RHEA-COMP:11060"/>
        <dbReference type="Rhea" id="RHEA-COMP:11605"/>
        <dbReference type="ChEBI" id="CHEBI:15378"/>
        <dbReference type="ChEBI" id="CHEBI:30013"/>
        <dbReference type="ChEBI" id="CHEBI:30616"/>
        <dbReference type="ChEBI" id="CHEBI:61977"/>
        <dbReference type="ChEBI" id="CHEBI:456216"/>
        <dbReference type="EC" id="2.7.11.1"/>
    </reaction>
</comment>
<comment type="cofactor">
    <cofactor evidence="7">
        <name>Mg(2+)</name>
        <dbReference type="ChEBI" id="CHEBI:18420"/>
    </cofactor>
</comment>
<comment type="activity regulation">
    <text evidence="9">Activated in response to hyperosmotic stress: cell shrinkage promotes formation of a membraneless compartment that concentrates wnk-1 with its downstrem substrates.</text>
</comment>
<comment type="subunit">
    <text evidence="6 7">Interacts with gck-3 (via C-terminus).</text>
</comment>
<comment type="interaction">
    <interactant intactId="EBI-6540721">
        <id>X5M5N0</id>
    </interactant>
    <interactant intactId="EBI-7713242">
        <id>G5EEN4</id>
        <label>gck-3</label>
    </interactant>
    <organismsDiffer>false</organismsDiffer>
    <experiments>3</experiments>
</comment>
<comment type="subcellular location">
    <subcellularLocation>
        <location evidence="1">Cytoplasm</location>
    </subcellularLocation>
    <text evidence="1">Mediates formation and localizes to cytoplasmic membraneless compartment in response to hyperosmotic stress.</text>
</comment>
<comment type="alternative products">
    <event type="alternative splicing"/>
    <isoform>
        <id>X5M5N0-1</id>
        <name evidence="26">n</name>
        <sequence type="displayed"/>
    </isoform>
    <isoform>
        <id>X5M5N0-2</id>
        <name evidence="13">a</name>
        <sequence type="described" ref="VSP_057685 VSP_057686 VSP_057688"/>
    </isoform>
    <isoform>
        <id>X5M5N0-3</id>
        <name evidence="14">b</name>
        <sequence type="described" ref="VSP_057685 VSP_057686 VSP_057687 VSP_057688"/>
    </isoform>
    <isoform>
        <id>X5M5N0-4</id>
        <name evidence="15">c</name>
        <sequence type="described" ref="VSP_057684 VSP_057685 VSP_057686 VSP_057688"/>
    </isoform>
    <isoform>
        <id>X5M5N0-5</id>
        <name evidence="16">d</name>
        <sequence type="described" ref="VSP_057686 VSP_057688"/>
    </isoform>
    <isoform>
        <id>X5M5N0-6</id>
        <name evidence="17">e</name>
        <sequence type="described" ref="VSP_057686 VSP_057687 VSP_057688"/>
    </isoform>
    <isoform>
        <id>X5M5N0-7</id>
        <name evidence="18">f</name>
        <sequence type="described" ref="VSP_057684 VSP_057686 VSP_057688"/>
    </isoform>
    <isoform>
        <id>X5M5N0-8</id>
        <name evidence="19">g</name>
        <sequence type="described" ref="VSP_057685 VSP_057688"/>
    </isoform>
    <isoform>
        <id>X5M5N0-9</id>
        <name evidence="20">h</name>
        <sequence type="described" ref="VSP_057685 VSP_057687 VSP_057688"/>
    </isoform>
    <isoform>
        <id>X5M5N0-10</id>
        <name evidence="21">i</name>
        <sequence type="described" ref="VSP_057684 VSP_057685 VSP_057688"/>
    </isoform>
    <isoform>
        <id>X5M5N0-11</id>
        <name evidence="22">j</name>
        <sequence type="described" ref="VSP_057688"/>
    </isoform>
    <isoform>
        <id>X5M5N0-12</id>
        <name evidence="23">k</name>
        <sequence type="described" ref="VSP_057687 VSP_057688"/>
    </isoform>
    <isoform>
        <id>X5M5N0-13</id>
        <name evidence="24">l</name>
        <sequence type="described" ref="VSP_057684 VSP_057688"/>
    </isoform>
    <isoform>
        <id>X5M5N0-14</id>
        <name evidence="25">m</name>
        <sequence type="described" ref="VSP_057685 VSP_057686"/>
    </isoform>
    <isoform>
        <id>X5M5N0-15</id>
        <name evidence="27">o</name>
        <sequence type="described" ref="VSP_057687"/>
    </isoform>
    <isoform>
        <id>X5M5N0-16</id>
        <name evidence="28">p</name>
        <sequence type="described" ref="VSP_057686"/>
    </isoform>
    <isoform>
        <id>X5M5N0-17</id>
        <name evidence="29">q</name>
        <sequence type="described" ref="VSP_057686 VSP_057687"/>
    </isoform>
    <isoform>
        <id>X5M5N0-18</id>
        <name evidence="30">r</name>
        <sequence type="described" ref="VSP_057685"/>
    </isoform>
    <isoform>
        <id>X5M5N0-19</id>
        <name evidence="31">s</name>
        <sequence type="described" ref="VSP_057685 VSP_057687"/>
    </isoform>
    <isoform>
        <id>X5M5N0-20</id>
        <name evidence="32">t</name>
        <sequence type="described" ref="VSP_057685 VSP_057686 VSP_057687"/>
    </isoform>
    <isoform>
        <id>X5M5N0-21</id>
        <name evidence="33">u</name>
        <sequence type="described" ref="VSP_057683 VSP_057688"/>
    </isoform>
    <isoform>
        <id>X5M5N0-22</id>
        <name evidence="34">v</name>
        <sequence type="described" ref="VSP_057683"/>
    </isoform>
</comment>
<comment type="tissue specificity">
    <text evidence="6">Expressed in pharynx, nervous system, hypodermis, spermatheca, excretory cell and canal and body wall muscles.</text>
</comment>
<comment type="domain">
    <text evidence="1">Disordered regions undergo liquid-liquid phase separation (LLPS) for the formation of a cytoplasmic membraneless compartment that concentrates WNK1 with its substrates, OXSR1/OSR1 and STK39/SPAK.</text>
</comment>
<comment type="disruption phenotype">
    <text evidence="6">RNAi-mediated knockdown causes impaired survival and slower volume recovery upon hypertonic stress.</text>
</comment>
<comment type="similarity">
    <text evidence="10">Belongs to the protein kinase superfamily. Ser/Thr protein kinase family. WNK subfamily.</text>
</comment>
<comment type="caution">
    <text evidence="1">Was named WNK/'with no lysine(K)' because key residues for catalysis, including the lysine involved in ATP binding, are either not conserved or differ compared to the residues described in other kinase family proteins.</text>
</comment>
<dbReference type="EC" id="2.7.11.1" evidence="7"/>
<dbReference type="EMBL" id="BX284604">
    <property type="protein sequence ID" value="CAA92591.3"/>
    <property type="molecule type" value="Genomic_DNA"/>
</dbReference>
<dbReference type="EMBL" id="BX284604">
    <property type="protein sequence ID" value="CAD59142.2"/>
    <property type="molecule type" value="Genomic_DNA"/>
</dbReference>
<dbReference type="EMBL" id="BX284604">
    <property type="protein sequence ID" value="CCE71523.1"/>
    <property type="molecule type" value="Genomic_DNA"/>
</dbReference>
<dbReference type="EMBL" id="BX284604">
    <property type="protein sequence ID" value="CCE71524.1"/>
    <property type="molecule type" value="Genomic_DNA"/>
</dbReference>
<dbReference type="EMBL" id="BX284604">
    <property type="protein sequence ID" value="CCE71525.1"/>
    <property type="molecule type" value="Genomic_DNA"/>
</dbReference>
<dbReference type="EMBL" id="BX284604">
    <property type="protein sequence ID" value="CCE71526.1"/>
    <property type="molecule type" value="Genomic_DNA"/>
</dbReference>
<dbReference type="EMBL" id="BX284604">
    <property type="protein sequence ID" value="CCE71527.1"/>
    <property type="molecule type" value="Genomic_DNA"/>
</dbReference>
<dbReference type="EMBL" id="BX284604">
    <property type="protein sequence ID" value="CCE71529.1"/>
    <property type="molecule type" value="Genomic_DNA"/>
</dbReference>
<dbReference type="EMBL" id="BX284604">
    <property type="protein sequence ID" value="CCE71530.1"/>
    <property type="molecule type" value="Genomic_DNA"/>
</dbReference>
<dbReference type="EMBL" id="BX284604">
    <property type="protein sequence ID" value="CCE71531.1"/>
    <property type="molecule type" value="Genomic_DNA"/>
</dbReference>
<dbReference type="EMBL" id="BX284604">
    <property type="protein sequence ID" value="CCE71532.1"/>
    <property type="molecule type" value="Genomic_DNA"/>
</dbReference>
<dbReference type="EMBL" id="BX284604">
    <property type="protein sequence ID" value="CCE71533.1"/>
    <property type="molecule type" value="Genomic_DNA"/>
</dbReference>
<dbReference type="EMBL" id="BX284604">
    <property type="protein sequence ID" value="CCE71534.1"/>
    <property type="molecule type" value="Genomic_DNA"/>
</dbReference>
<dbReference type="EMBL" id="BX284604">
    <property type="protein sequence ID" value="CDO41073.1"/>
    <property type="molecule type" value="Genomic_DNA"/>
</dbReference>
<dbReference type="EMBL" id="BX284604">
    <property type="protein sequence ID" value="CDO41074.1"/>
    <property type="molecule type" value="Genomic_DNA"/>
</dbReference>
<dbReference type="EMBL" id="BX284604">
    <property type="protein sequence ID" value="CDO41075.1"/>
    <property type="molecule type" value="Genomic_DNA"/>
</dbReference>
<dbReference type="EMBL" id="BX284604">
    <property type="protein sequence ID" value="CDO41076.1"/>
    <property type="molecule type" value="Genomic_DNA"/>
</dbReference>
<dbReference type="EMBL" id="BX284604">
    <property type="protein sequence ID" value="CDO41077.1"/>
    <property type="molecule type" value="Genomic_DNA"/>
</dbReference>
<dbReference type="EMBL" id="BX284604">
    <property type="protein sequence ID" value="CDO41078.1"/>
    <property type="molecule type" value="Genomic_DNA"/>
</dbReference>
<dbReference type="EMBL" id="BX284604">
    <property type="protein sequence ID" value="CDO41079.1"/>
    <property type="molecule type" value="Genomic_DNA"/>
</dbReference>
<dbReference type="EMBL" id="BX284604">
    <property type="protein sequence ID" value="CDO41080.1"/>
    <property type="molecule type" value="Genomic_DNA"/>
</dbReference>
<dbReference type="EMBL" id="BX284604">
    <property type="protein sequence ID" value="CDO41081.1"/>
    <property type="molecule type" value="Genomic_DNA"/>
</dbReference>
<dbReference type="PIR" id="T19964">
    <property type="entry name" value="T19964"/>
</dbReference>
<dbReference type="RefSeq" id="NP_001255367.1">
    <property type="nucleotide sequence ID" value="NM_001268438.1"/>
</dbReference>
<dbReference type="RefSeq" id="NP_001255368.1">
    <molecule id="X5M5N0-11"/>
    <property type="nucleotide sequence ID" value="NM_001268439.4"/>
</dbReference>
<dbReference type="RefSeq" id="NP_001255369.1">
    <molecule id="X5M5N0-12"/>
    <property type="nucleotide sequence ID" value="NM_001268440.3"/>
</dbReference>
<dbReference type="RefSeq" id="NP_001255370.1">
    <molecule id="X5M5N0-5"/>
    <property type="nucleotide sequence ID" value="NM_001268441.4"/>
</dbReference>
<dbReference type="RefSeq" id="NP_001255371.1">
    <molecule id="X5M5N0-6"/>
    <property type="nucleotide sequence ID" value="NM_001268442.4"/>
</dbReference>
<dbReference type="RefSeq" id="NP_001255372.1">
    <molecule id="X5M5N0-8"/>
    <property type="nucleotide sequence ID" value="NM_001268443.3"/>
</dbReference>
<dbReference type="RefSeq" id="NP_001255373.1">
    <molecule id="X5M5N0-9"/>
    <property type="nucleotide sequence ID" value="NM_001268444.3"/>
</dbReference>
<dbReference type="RefSeq" id="NP_001255374.1">
    <molecule id="X5M5N0-13"/>
    <property type="nucleotide sequence ID" value="NM_001268445.3"/>
</dbReference>
<dbReference type="RefSeq" id="NP_001255375.1">
    <molecule id="X5M5N0-7"/>
    <property type="nucleotide sequence ID" value="NM_001268446.3"/>
</dbReference>
<dbReference type="RefSeq" id="NP_001255376.1">
    <molecule id="X5M5N0-10"/>
    <property type="nucleotide sequence ID" value="NM_001268447.3"/>
</dbReference>
<dbReference type="RefSeq" id="NP_001255377.1">
    <molecule id="X5M5N0-4"/>
    <property type="nucleotide sequence ID" value="NM_001268448.3"/>
</dbReference>
<dbReference type="RefSeq" id="NP_001294032.1">
    <molecule id="X5M5N0-1"/>
    <property type="nucleotide sequence ID" value="NM_001307103.3"/>
</dbReference>
<dbReference type="RefSeq" id="NP_001294033.1">
    <molecule id="X5M5N0-15"/>
    <property type="nucleotide sequence ID" value="NM_001307104.3"/>
</dbReference>
<dbReference type="RefSeq" id="NP_001294034.1">
    <property type="nucleotide sequence ID" value="NM_001307105.1"/>
</dbReference>
<dbReference type="RefSeq" id="NP_001294035.1">
    <molecule id="X5M5N0-17"/>
    <property type="nucleotide sequence ID" value="NM_001307106.4"/>
</dbReference>
<dbReference type="RefSeq" id="NP_001294036.1">
    <molecule id="X5M5N0-18"/>
    <property type="nucleotide sequence ID" value="NM_001307107.3"/>
</dbReference>
<dbReference type="RefSeq" id="NP_001294037.1">
    <molecule id="X5M5N0-19"/>
    <property type="nucleotide sequence ID" value="NM_001307108.3"/>
</dbReference>
<dbReference type="RefSeq" id="NP_001294038.1">
    <molecule id="X5M5N0-20"/>
    <property type="nucleotide sequence ID" value="NM_001307109.4"/>
</dbReference>
<dbReference type="RefSeq" id="NP_001294039.1">
    <molecule id="X5M5N0-21"/>
    <property type="nucleotide sequence ID" value="NM_001307110.3"/>
</dbReference>
<dbReference type="RefSeq" id="NP_001294040.1">
    <molecule id="X5M5N0-22"/>
    <property type="nucleotide sequence ID" value="NM_001307111.4"/>
</dbReference>
<dbReference type="RefSeq" id="NP_001368092.1">
    <molecule id="X5M5N0-14"/>
    <property type="nucleotide sequence ID" value="NM_001380400.1"/>
</dbReference>
<dbReference type="RefSeq" id="NP_001368454.1">
    <molecule id="X5M5N0-16"/>
    <property type="nucleotide sequence ID" value="NM_001380399.1"/>
</dbReference>
<dbReference type="RefSeq" id="NP_501603.3">
    <molecule id="X5M5N0-2"/>
    <property type="nucleotide sequence ID" value="NM_069202.5"/>
</dbReference>
<dbReference type="RefSeq" id="NP_872075.2">
    <molecule id="X5M5N0-3"/>
    <property type="nucleotide sequence ID" value="NM_182275.7"/>
</dbReference>
<dbReference type="SMR" id="X5M5N0"/>
<dbReference type="FunCoup" id="X5M5N0">
    <property type="interactions" value="91"/>
</dbReference>
<dbReference type="IntAct" id="X5M5N0">
    <property type="interactions" value="2"/>
</dbReference>
<dbReference type="MINT" id="X5M5N0"/>
<dbReference type="STRING" id="6239.C46C2.1n.2"/>
<dbReference type="PaxDb" id="6239-C46C2.1m"/>
<dbReference type="PeptideAtlas" id="X5M5N0"/>
<dbReference type="EnsemblMetazoa" id="C46C2.1a.1">
    <molecule id="X5M5N0-2"/>
    <property type="protein sequence ID" value="C46C2.1a.1"/>
    <property type="gene ID" value="WBGene00006941"/>
</dbReference>
<dbReference type="EnsemblMetazoa" id="C46C2.1b.1">
    <molecule id="X5M5N0-3"/>
    <property type="protein sequence ID" value="C46C2.1b.1"/>
    <property type="gene ID" value="WBGene00006941"/>
</dbReference>
<dbReference type="EnsemblMetazoa" id="C46C2.1c.1">
    <molecule id="X5M5N0-4"/>
    <property type="protein sequence ID" value="C46C2.1c.1"/>
    <property type="gene ID" value="WBGene00006941"/>
</dbReference>
<dbReference type="EnsemblMetazoa" id="C46C2.1d.1">
    <molecule id="X5M5N0-5"/>
    <property type="protein sequence ID" value="C46C2.1d.1"/>
    <property type="gene ID" value="WBGene00006941"/>
</dbReference>
<dbReference type="EnsemblMetazoa" id="C46C2.1e.1">
    <molecule id="X5M5N0-6"/>
    <property type="protein sequence ID" value="C46C2.1e.1"/>
    <property type="gene ID" value="WBGene00006941"/>
</dbReference>
<dbReference type="EnsemblMetazoa" id="C46C2.1f.1">
    <molecule id="X5M5N0-7"/>
    <property type="protein sequence ID" value="C46C2.1f.1"/>
    <property type="gene ID" value="WBGene00006941"/>
</dbReference>
<dbReference type="EnsemblMetazoa" id="C46C2.1g.1">
    <molecule id="X5M5N0-8"/>
    <property type="protein sequence ID" value="C46C2.1g.1"/>
    <property type="gene ID" value="WBGene00006941"/>
</dbReference>
<dbReference type="EnsemblMetazoa" id="C46C2.1h.1">
    <molecule id="X5M5N0-9"/>
    <property type="protein sequence ID" value="C46C2.1h.1"/>
    <property type="gene ID" value="WBGene00006941"/>
</dbReference>
<dbReference type="EnsemblMetazoa" id="C46C2.1i.1">
    <molecule id="X5M5N0-10"/>
    <property type="protein sequence ID" value="C46C2.1i.1"/>
    <property type="gene ID" value="WBGene00006941"/>
</dbReference>
<dbReference type="EnsemblMetazoa" id="C46C2.1j.1">
    <molecule id="X5M5N0-11"/>
    <property type="protein sequence ID" value="C46C2.1j.1"/>
    <property type="gene ID" value="WBGene00006941"/>
</dbReference>
<dbReference type="EnsemblMetazoa" id="C46C2.1k.1">
    <molecule id="X5M5N0-12"/>
    <property type="protein sequence ID" value="C46C2.1k.1"/>
    <property type="gene ID" value="WBGene00006941"/>
</dbReference>
<dbReference type="EnsemblMetazoa" id="C46C2.1l.1">
    <molecule id="X5M5N0-13"/>
    <property type="protein sequence ID" value="C46C2.1l.1"/>
    <property type="gene ID" value="WBGene00006941"/>
</dbReference>
<dbReference type="EnsemblMetazoa" id="C46C2.1m.1">
    <molecule id="X5M5N0-14"/>
    <property type="protein sequence ID" value="C46C2.1m.1"/>
    <property type="gene ID" value="WBGene00006941"/>
</dbReference>
<dbReference type="EnsemblMetazoa" id="C46C2.1n.1">
    <molecule id="X5M5N0-1"/>
    <property type="protein sequence ID" value="C46C2.1n.1"/>
    <property type="gene ID" value="WBGene00006941"/>
</dbReference>
<dbReference type="EnsemblMetazoa" id="C46C2.1o.1">
    <molecule id="X5M5N0-15"/>
    <property type="protein sequence ID" value="C46C2.1o.1"/>
    <property type="gene ID" value="WBGene00006941"/>
</dbReference>
<dbReference type="EnsemblMetazoa" id="C46C2.1p.1">
    <molecule id="X5M5N0-16"/>
    <property type="protein sequence ID" value="C46C2.1p.1"/>
    <property type="gene ID" value="WBGene00006941"/>
</dbReference>
<dbReference type="EnsemblMetazoa" id="C46C2.1q.1">
    <molecule id="X5M5N0-17"/>
    <property type="protein sequence ID" value="C46C2.1q.1"/>
    <property type="gene ID" value="WBGene00006941"/>
</dbReference>
<dbReference type="EnsemblMetazoa" id="C46C2.1r.1">
    <molecule id="X5M5N0-18"/>
    <property type="protein sequence ID" value="C46C2.1r.1"/>
    <property type="gene ID" value="WBGene00006941"/>
</dbReference>
<dbReference type="EnsemblMetazoa" id="C46C2.1s.1">
    <molecule id="X5M5N0-19"/>
    <property type="protein sequence ID" value="C46C2.1s.1"/>
    <property type="gene ID" value="WBGene00006941"/>
</dbReference>
<dbReference type="EnsemblMetazoa" id="C46C2.1t.1">
    <molecule id="X5M5N0-20"/>
    <property type="protein sequence ID" value="C46C2.1t.1"/>
    <property type="gene ID" value="WBGene00006941"/>
</dbReference>
<dbReference type="EnsemblMetazoa" id="C46C2.1u.1">
    <molecule id="X5M5N0-21"/>
    <property type="protein sequence ID" value="C46C2.1u.1"/>
    <property type="gene ID" value="WBGene00006941"/>
</dbReference>
<dbReference type="EnsemblMetazoa" id="C46C2.1v.1">
    <molecule id="X5M5N0-22"/>
    <property type="protein sequence ID" value="C46C2.1v.1"/>
    <property type="gene ID" value="WBGene00006941"/>
</dbReference>
<dbReference type="GeneID" id="177743"/>
<dbReference type="KEGG" id="cel:CELE_C46C2.1"/>
<dbReference type="UCSC" id="C46C2.1a">
    <property type="organism name" value="c. elegans"/>
</dbReference>
<dbReference type="AGR" id="WB:WBGene00006941"/>
<dbReference type="CTD" id="177743"/>
<dbReference type="WormBase" id="C46C2.1a">
    <molecule id="X5M5N0-2"/>
    <property type="protein sequence ID" value="CE37331"/>
    <property type="gene ID" value="WBGene00006941"/>
    <property type="gene designation" value="wnk-1"/>
</dbReference>
<dbReference type="WormBase" id="C46C2.1b">
    <molecule id="X5M5N0-3"/>
    <property type="protein sequence ID" value="CE37332"/>
    <property type="gene ID" value="WBGene00006941"/>
    <property type="gene designation" value="wnk-1"/>
</dbReference>
<dbReference type="WormBase" id="C46C2.1c">
    <molecule id="X5M5N0-4"/>
    <property type="protein sequence ID" value="CE46706"/>
    <property type="gene ID" value="WBGene00006941"/>
    <property type="gene designation" value="wnk-1"/>
</dbReference>
<dbReference type="WormBase" id="C46C2.1d">
    <molecule id="X5M5N0-5"/>
    <property type="protein sequence ID" value="CE46603"/>
    <property type="gene ID" value="WBGene00006941"/>
    <property type="gene designation" value="wnk-1"/>
</dbReference>
<dbReference type="WormBase" id="C46C2.1e">
    <molecule id="X5M5N0-6"/>
    <property type="protein sequence ID" value="CE46553"/>
    <property type="gene ID" value="WBGene00006941"/>
    <property type="gene designation" value="wnk-1"/>
</dbReference>
<dbReference type="WormBase" id="C46C2.1f">
    <molecule id="X5M5N0-7"/>
    <property type="protein sequence ID" value="CE46627"/>
    <property type="gene ID" value="WBGene00006941"/>
    <property type="gene designation" value="wnk-1"/>
</dbReference>
<dbReference type="WormBase" id="C46C2.1g">
    <molecule id="X5M5N0-8"/>
    <property type="protein sequence ID" value="CE46722"/>
    <property type="gene ID" value="WBGene00006941"/>
    <property type="gene designation" value="wnk-1"/>
</dbReference>
<dbReference type="WormBase" id="C46C2.1h">
    <molecule id="X5M5N0-9"/>
    <property type="protein sequence ID" value="CE46797"/>
    <property type="gene ID" value="WBGene00006941"/>
    <property type="gene designation" value="wnk-1"/>
</dbReference>
<dbReference type="WormBase" id="C46C2.1i">
    <molecule id="X5M5N0-10"/>
    <property type="protein sequence ID" value="CE46749"/>
    <property type="gene ID" value="WBGene00006941"/>
    <property type="gene designation" value="wnk-1"/>
</dbReference>
<dbReference type="WormBase" id="C46C2.1j">
    <molecule id="X5M5N0-11"/>
    <property type="protein sequence ID" value="CE46831"/>
    <property type="gene ID" value="WBGene00006941"/>
    <property type="gene designation" value="wnk-1"/>
</dbReference>
<dbReference type="WormBase" id="C46C2.1k">
    <molecule id="X5M5N0-12"/>
    <property type="protein sequence ID" value="CE46763"/>
    <property type="gene ID" value="WBGene00006941"/>
    <property type="gene designation" value="wnk-1"/>
</dbReference>
<dbReference type="WormBase" id="C46C2.1l">
    <molecule id="X5M5N0-13"/>
    <property type="protein sequence ID" value="CE46557"/>
    <property type="gene ID" value="WBGene00006941"/>
    <property type="gene designation" value="wnk-1"/>
</dbReference>
<dbReference type="WormBase" id="C46C2.1m">
    <molecule id="X5M5N0-14"/>
    <property type="protein sequence ID" value="CE46636"/>
    <property type="gene ID" value="WBGene00006941"/>
    <property type="gene designation" value="wnk-1"/>
</dbReference>
<dbReference type="WormBase" id="C46C2.1n">
    <molecule id="X5M5N0-1"/>
    <property type="protein sequence ID" value="CE49690"/>
    <property type="gene ID" value="WBGene00006941"/>
    <property type="gene designation" value="wnk-1"/>
</dbReference>
<dbReference type="WormBase" id="C46C2.1o">
    <molecule id="X5M5N0-15"/>
    <property type="protein sequence ID" value="CE49733"/>
    <property type="gene ID" value="WBGene00006941"/>
    <property type="gene designation" value="wnk-1"/>
</dbReference>
<dbReference type="WormBase" id="C46C2.1p">
    <molecule id="X5M5N0-16"/>
    <property type="protein sequence ID" value="CE49626"/>
    <property type="gene ID" value="WBGene00006941"/>
    <property type="gene designation" value="wnk-1"/>
</dbReference>
<dbReference type="WormBase" id="C46C2.1q">
    <molecule id="X5M5N0-17"/>
    <property type="protein sequence ID" value="CE49684"/>
    <property type="gene ID" value="WBGene00006941"/>
    <property type="gene designation" value="wnk-1"/>
</dbReference>
<dbReference type="WormBase" id="C46C2.1r">
    <molecule id="X5M5N0-18"/>
    <property type="protein sequence ID" value="CE49717"/>
    <property type="gene ID" value="WBGene00006941"/>
    <property type="gene designation" value="wnk-1"/>
</dbReference>
<dbReference type="WormBase" id="C46C2.1s">
    <molecule id="X5M5N0-19"/>
    <property type="protein sequence ID" value="CE49622"/>
    <property type="gene ID" value="WBGene00006941"/>
    <property type="gene designation" value="wnk-1"/>
</dbReference>
<dbReference type="WormBase" id="C46C2.1t">
    <molecule id="X5M5N0-20"/>
    <property type="protein sequence ID" value="CE49653"/>
    <property type="gene ID" value="WBGene00006941"/>
    <property type="gene designation" value="wnk-1"/>
</dbReference>
<dbReference type="WormBase" id="C46C2.1u">
    <molecule id="X5M5N0-21"/>
    <property type="protein sequence ID" value="CE49693"/>
    <property type="gene ID" value="WBGene00006941"/>
    <property type="gene designation" value="wnk-1"/>
</dbReference>
<dbReference type="WormBase" id="C46C2.1v">
    <molecule id="X5M5N0-22"/>
    <property type="protein sequence ID" value="CE49732"/>
    <property type="gene ID" value="WBGene00006941"/>
    <property type="gene designation" value="wnk-1"/>
</dbReference>
<dbReference type="eggNOG" id="KOG0584">
    <property type="taxonomic scope" value="Eukaryota"/>
</dbReference>
<dbReference type="GeneTree" id="ENSGT01030000239929"/>
<dbReference type="HOGENOM" id="CLU_001879_1_0_1"/>
<dbReference type="InParanoid" id="X5M5N0"/>
<dbReference type="OMA" id="MDQECAQ"/>
<dbReference type="OrthoDB" id="4062651at2759"/>
<dbReference type="PRO" id="PR:X5M5N0"/>
<dbReference type="Proteomes" id="UP000001940">
    <property type="component" value="Chromosome IV"/>
</dbReference>
<dbReference type="Bgee" id="WBGene00006941">
    <property type="expression patterns" value="Expressed in pharyngeal muscle cell (C elegans) and 4 other cell types or tissues"/>
</dbReference>
<dbReference type="GO" id="GO:0005737">
    <property type="term" value="C:cytoplasm"/>
    <property type="evidence" value="ECO:0000318"/>
    <property type="project" value="GO_Central"/>
</dbReference>
<dbReference type="GO" id="GO:0005524">
    <property type="term" value="F:ATP binding"/>
    <property type="evidence" value="ECO:0007669"/>
    <property type="project" value="UniProtKB-KW"/>
</dbReference>
<dbReference type="GO" id="GO:0140693">
    <property type="term" value="F:molecular condensate scaffold activity"/>
    <property type="evidence" value="ECO:0000314"/>
    <property type="project" value="UniProtKB"/>
</dbReference>
<dbReference type="GO" id="GO:0019870">
    <property type="term" value="F:potassium channel inhibitor activity"/>
    <property type="evidence" value="ECO:0000318"/>
    <property type="project" value="GO_Central"/>
</dbReference>
<dbReference type="GO" id="GO:0106310">
    <property type="term" value="F:protein serine kinase activity"/>
    <property type="evidence" value="ECO:0007669"/>
    <property type="project" value="RHEA"/>
</dbReference>
<dbReference type="GO" id="GO:0004674">
    <property type="term" value="F:protein serine/threonine kinase activity"/>
    <property type="evidence" value="ECO:0000318"/>
    <property type="project" value="GO_Central"/>
</dbReference>
<dbReference type="GO" id="GO:0006884">
    <property type="term" value="P:cell volume homeostasis"/>
    <property type="evidence" value="ECO:0000314"/>
    <property type="project" value="UniProtKB"/>
</dbReference>
<dbReference type="GO" id="GO:0071474">
    <property type="term" value="P:cellular hyperosmotic response"/>
    <property type="evidence" value="ECO:0000314"/>
    <property type="project" value="UniProtKB"/>
</dbReference>
<dbReference type="GO" id="GO:0006972">
    <property type="term" value="P:hyperosmotic response"/>
    <property type="evidence" value="ECO:0000315"/>
    <property type="project" value="UniProtKB"/>
</dbReference>
<dbReference type="GO" id="GO:0035556">
    <property type="term" value="P:intracellular signal transduction"/>
    <property type="evidence" value="ECO:0000318"/>
    <property type="project" value="GO_Central"/>
</dbReference>
<dbReference type="GO" id="GO:0140694">
    <property type="term" value="P:membraneless organelle assembly"/>
    <property type="evidence" value="ECO:0000314"/>
    <property type="project" value="UniProtKB"/>
</dbReference>
<dbReference type="GO" id="GO:0050801">
    <property type="term" value="P:monoatomic ion homeostasis"/>
    <property type="evidence" value="ECO:0000318"/>
    <property type="project" value="GO_Central"/>
</dbReference>
<dbReference type="GO" id="GO:0050891">
    <property type="term" value="P:multicellular organismal-level water homeostasis"/>
    <property type="evidence" value="ECO:0000315"/>
    <property type="project" value="GO_Central"/>
</dbReference>
<dbReference type="GO" id="GO:0010766">
    <property type="term" value="P:negative regulation of sodium ion transport"/>
    <property type="evidence" value="ECO:0000318"/>
    <property type="project" value="GO_Central"/>
</dbReference>
<dbReference type="GO" id="GO:0010628">
    <property type="term" value="P:positive regulation of gene expression"/>
    <property type="evidence" value="ECO:0000315"/>
    <property type="project" value="GO_Central"/>
</dbReference>
<dbReference type="GO" id="GO:1903288">
    <property type="term" value="P:positive regulation of potassium ion import across plasma membrane"/>
    <property type="evidence" value="ECO:0000318"/>
    <property type="project" value="GO_Central"/>
</dbReference>
<dbReference type="CDD" id="cd13983">
    <property type="entry name" value="STKc_WNK"/>
    <property type="match status" value="1"/>
</dbReference>
<dbReference type="FunFam" id="3.30.200.20:FF:001054">
    <property type="entry name" value="Serine/threonine-protein kinase WNK1"/>
    <property type="match status" value="1"/>
</dbReference>
<dbReference type="FunFam" id="1.10.510.10:FF:000006">
    <property type="entry name" value="Serine/threonine-protein kinase WNK1 isoform 2"/>
    <property type="match status" value="1"/>
</dbReference>
<dbReference type="Gene3D" id="3.10.20.90">
    <property type="entry name" value="Phosphatidylinositol 3-kinase Catalytic Subunit, Chain A, domain 1"/>
    <property type="match status" value="1"/>
</dbReference>
<dbReference type="Gene3D" id="3.30.200.20">
    <property type="entry name" value="Phosphorylase Kinase, domain 1"/>
    <property type="match status" value="1"/>
</dbReference>
<dbReference type="Gene3D" id="1.10.510.10">
    <property type="entry name" value="Transferase(Phosphotransferase) domain 1"/>
    <property type="match status" value="1"/>
</dbReference>
<dbReference type="InterPro" id="IPR056865">
    <property type="entry name" value="CCTL2_WNK"/>
</dbReference>
<dbReference type="InterPro" id="IPR011009">
    <property type="entry name" value="Kinase-like_dom_sf"/>
</dbReference>
<dbReference type="InterPro" id="IPR024678">
    <property type="entry name" value="Kinase_OSR1/WNK_CCT"/>
</dbReference>
<dbReference type="InterPro" id="IPR000719">
    <property type="entry name" value="Prot_kinase_dom"/>
</dbReference>
<dbReference type="InterPro" id="IPR008271">
    <property type="entry name" value="Ser/Thr_kinase_AS"/>
</dbReference>
<dbReference type="InterPro" id="IPR050588">
    <property type="entry name" value="WNK_Ser-Thr_kinase"/>
</dbReference>
<dbReference type="PANTHER" id="PTHR13902">
    <property type="entry name" value="SERINE/THREONINE-PROTEIN KINASE WNK WITH NO LYSINE -RELATED"/>
    <property type="match status" value="1"/>
</dbReference>
<dbReference type="Pfam" id="PF24889">
    <property type="entry name" value="CCTL2_WNK"/>
    <property type="match status" value="1"/>
</dbReference>
<dbReference type="Pfam" id="PF12202">
    <property type="entry name" value="OSR1_C"/>
    <property type="match status" value="1"/>
</dbReference>
<dbReference type="Pfam" id="PF00069">
    <property type="entry name" value="Pkinase"/>
    <property type="match status" value="1"/>
</dbReference>
<dbReference type="SMART" id="SM00220">
    <property type="entry name" value="S_TKc"/>
    <property type="match status" value="1"/>
</dbReference>
<dbReference type="SUPFAM" id="SSF56112">
    <property type="entry name" value="Protein kinase-like (PK-like)"/>
    <property type="match status" value="1"/>
</dbReference>
<dbReference type="PROSITE" id="PS50011">
    <property type="entry name" value="PROTEIN_KINASE_DOM"/>
    <property type="match status" value="1"/>
</dbReference>
<dbReference type="PROSITE" id="PS00108">
    <property type="entry name" value="PROTEIN_KINASE_ST"/>
    <property type="match status" value="1"/>
</dbReference>
<organism evidence="12">
    <name type="scientific">Caenorhabditis elegans</name>
    <dbReference type="NCBI Taxonomy" id="6239"/>
    <lineage>
        <taxon>Eukaryota</taxon>
        <taxon>Metazoa</taxon>
        <taxon>Ecdysozoa</taxon>
        <taxon>Nematoda</taxon>
        <taxon>Chromadorea</taxon>
        <taxon>Rhabditida</taxon>
        <taxon>Rhabditina</taxon>
        <taxon>Rhabditomorpha</taxon>
        <taxon>Rhabditoidea</taxon>
        <taxon>Rhabditidae</taxon>
        <taxon>Peloderinae</taxon>
        <taxon>Caenorhabditis</taxon>
    </lineage>
</organism>
<accession>X5M5N0</accession>
<accession>H2L282</accession>
<accession>H2L283</accession>
<accession>H2L284</accession>
<accession>H2L285</accession>
<accession>H2L286</accession>
<accession>H2L288</accession>
<accession>H2L289</accession>
<accession>H2L290</accession>
<accession>H2L291</accession>
<accession>H2L292</accession>
<accession>H2L293</accession>
<accession>Q18657</accession>
<accession>Q8I127</accession>
<accession>X5LPT1</accession>
<accession>X5LPT5</accession>
<accession>X5LV40</accession>
<accession>X5LV44</accession>
<accession>X5LX64</accession>
<accession>X5M5N6</accession>
<accession>X5M8T1</accession>
<accession>X5M8T5</accession>
<gene>
    <name evidence="26" type="primary">wnk-1</name>
    <name evidence="26" type="ORF">C46C2.1</name>
</gene>
<reference evidence="10" key="1">
    <citation type="journal article" date="2007" name="Am. J. Physiol.">
        <title>Evolutionarily conserved WNK and Ste20 kinases are essential for acute volume recovery and survival after hypertonic shrinkage in Caenorhabditis elegans.</title>
        <authorList>
            <person name="Choe K.P."/>
            <person name="Strange K."/>
        </authorList>
    </citation>
    <scope>NUCLEOTIDE SEQUENCE [MRNA] (ISOFORM A)</scope>
    <scope>TISSUE SPECIFICITY</scope>
    <scope>INTERACTION WITH GCK-3</scope>
    <scope>DISRUPTION PHENOTYPE</scope>
</reference>
<reference evidence="12" key="2">
    <citation type="journal article" date="1998" name="Science">
        <title>Genome sequence of the nematode C. elegans: a platform for investigating biology.</title>
        <authorList>
            <consortium name="The C. elegans sequencing consortium"/>
        </authorList>
    </citation>
    <scope>NUCLEOTIDE SEQUENCE [LARGE SCALE GENOMIC DNA]</scope>
    <source>
        <strain evidence="12">Bristol N2</strain>
    </source>
</reference>
<reference evidence="10" key="3">
    <citation type="journal article" date="2008" name="EMBO Rep.">
        <title>Caenorhabditis elegans WNK-STE20 pathway regulates tube formation by modulating ClC channel activity.</title>
        <authorList>
            <person name="Hisamoto N."/>
            <person name="Moriguchi T."/>
            <person name="Urushiyama S."/>
            <person name="Mitani S."/>
            <person name="Shibuya H."/>
            <person name="Matsumoto K."/>
        </authorList>
    </citation>
    <scope>FUNCTION</scope>
    <scope>CATALYTIC ACTIVITY</scope>
    <scope>INTERACTION WITH GCK-3</scope>
    <scope>MUTAGENESIS OF LYS-346; SER-497; PHE-1133 AND PHE-1222</scope>
</reference>
<reference evidence="10" key="4">
    <citation type="journal article" date="2012" name="Am. J. Physiol.">
        <title>GCN-2 dependent inhibition of protein synthesis activates osmosensitive gene transcription via WNK and Ste20 kinase signaling.</title>
        <authorList>
            <person name="Lee E.C."/>
            <person name="Strange K."/>
        </authorList>
    </citation>
    <scope>FUNCTION</scope>
</reference>
<reference key="5">
    <citation type="journal article" date="2022" name="Cell">
        <title>WNK kinases sense molecular crowding and rescue cell volume via phase separation.</title>
        <authorList>
            <person name="Boyd-Shiwarski C.R."/>
            <person name="Shiwarski D.J."/>
            <person name="Griffiths S.E."/>
            <person name="Beacham R.T."/>
            <person name="Norrell L."/>
            <person name="Morrison D.E."/>
            <person name="Wang J."/>
            <person name="Mann J."/>
            <person name="Tennant W."/>
            <person name="Anderson E.N."/>
            <person name="Franks J."/>
            <person name="Calderon M."/>
            <person name="Connolly K.A."/>
            <person name="Cheema M.U."/>
            <person name="Weaver C.J."/>
            <person name="Nkashama L.J."/>
            <person name="Weckerly C.C."/>
            <person name="Querry K.E."/>
            <person name="Pandey U.B."/>
            <person name="Donnelly C.J."/>
            <person name="Sun D."/>
            <person name="Rodan A.R."/>
            <person name="Subramanya A.R."/>
        </authorList>
    </citation>
    <scope>FUNCTION</scope>
    <scope>ACTIVITY REGULATION</scope>
</reference>
<proteinExistence type="evidence at protein level"/>
<evidence type="ECO:0000250" key="1">
    <source>
        <dbReference type="UniProtKB" id="Q9H4A3"/>
    </source>
</evidence>
<evidence type="ECO:0000250" key="2">
    <source>
        <dbReference type="UniProtKB" id="Q9JIH7"/>
    </source>
</evidence>
<evidence type="ECO:0000255" key="3"/>
<evidence type="ECO:0000255" key="4">
    <source>
        <dbReference type="PROSITE-ProRule" id="PRU00159"/>
    </source>
</evidence>
<evidence type="ECO:0000256" key="5">
    <source>
        <dbReference type="SAM" id="MobiDB-lite"/>
    </source>
</evidence>
<evidence type="ECO:0000269" key="6">
    <source>
    </source>
</evidence>
<evidence type="ECO:0000269" key="7">
    <source>
    </source>
</evidence>
<evidence type="ECO:0000269" key="8">
    <source>
    </source>
</evidence>
<evidence type="ECO:0000269" key="9">
    <source>
    </source>
</evidence>
<evidence type="ECO:0000305" key="10"/>
<evidence type="ECO:0000305" key="11">
    <source>
    </source>
</evidence>
<evidence type="ECO:0000312" key="12">
    <source>
        <dbReference type="Proteomes" id="UP000001940"/>
    </source>
</evidence>
<evidence type="ECO:0000312" key="13">
    <source>
        <dbReference type="WormBase" id="C46C2.1a"/>
    </source>
</evidence>
<evidence type="ECO:0000312" key="14">
    <source>
        <dbReference type="WormBase" id="C46C2.1b"/>
    </source>
</evidence>
<evidence type="ECO:0000312" key="15">
    <source>
        <dbReference type="WormBase" id="C46C2.1c"/>
    </source>
</evidence>
<evidence type="ECO:0000312" key="16">
    <source>
        <dbReference type="WormBase" id="C46C2.1d"/>
    </source>
</evidence>
<evidence type="ECO:0000312" key="17">
    <source>
        <dbReference type="WormBase" id="C46C2.1e"/>
    </source>
</evidence>
<evidence type="ECO:0000312" key="18">
    <source>
        <dbReference type="WormBase" id="C46C2.1f"/>
    </source>
</evidence>
<evidence type="ECO:0000312" key="19">
    <source>
        <dbReference type="WormBase" id="C46C2.1g"/>
    </source>
</evidence>
<evidence type="ECO:0000312" key="20">
    <source>
        <dbReference type="WormBase" id="C46C2.1h"/>
    </source>
</evidence>
<evidence type="ECO:0000312" key="21">
    <source>
        <dbReference type="WormBase" id="C46C2.1i"/>
    </source>
</evidence>
<evidence type="ECO:0000312" key="22">
    <source>
        <dbReference type="WormBase" id="C46C2.1j"/>
    </source>
</evidence>
<evidence type="ECO:0000312" key="23">
    <source>
        <dbReference type="WormBase" id="C46C2.1k"/>
    </source>
</evidence>
<evidence type="ECO:0000312" key="24">
    <source>
        <dbReference type="WormBase" id="C46C2.1l"/>
    </source>
</evidence>
<evidence type="ECO:0000312" key="25">
    <source>
        <dbReference type="WormBase" id="C46C2.1m"/>
    </source>
</evidence>
<evidence type="ECO:0000312" key="26">
    <source>
        <dbReference type="WormBase" id="C46C2.1n"/>
    </source>
</evidence>
<evidence type="ECO:0000312" key="27">
    <source>
        <dbReference type="WormBase" id="C46C2.1o"/>
    </source>
</evidence>
<evidence type="ECO:0000312" key="28">
    <source>
        <dbReference type="WormBase" id="C46C2.1p"/>
    </source>
</evidence>
<evidence type="ECO:0000312" key="29">
    <source>
        <dbReference type="WormBase" id="C46C2.1q"/>
    </source>
</evidence>
<evidence type="ECO:0000312" key="30">
    <source>
        <dbReference type="WormBase" id="C46C2.1r"/>
    </source>
</evidence>
<evidence type="ECO:0000312" key="31">
    <source>
        <dbReference type="WormBase" id="C46C2.1s"/>
    </source>
</evidence>
<evidence type="ECO:0000312" key="32">
    <source>
        <dbReference type="WormBase" id="C46C2.1t"/>
    </source>
</evidence>
<evidence type="ECO:0000312" key="33">
    <source>
        <dbReference type="WormBase" id="C46C2.1u"/>
    </source>
</evidence>
<evidence type="ECO:0000312" key="34">
    <source>
        <dbReference type="WormBase" id="C46C2.1v"/>
    </source>
</evidence>
<protein>
    <recommendedName>
        <fullName evidence="10">Serine/threonine-protein kinase WNK</fullName>
        <ecNumber evidence="7">2.7.11.1</ecNumber>
    </recommendedName>
    <alternativeName>
        <fullName evidence="11">Protein kinase with no lysine 1</fullName>
    </alternativeName>
</protein>